<evidence type="ECO:0000255" key="1">
    <source>
        <dbReference type="HAMAP-Rule" id="MF_01395"/>
    </source>
</evidence>
<evidence type="ECO:0000255" key="2">
    <source>
        <dbReference type="PROSITE-ProRule" id="PRU01136"/>
    </source>
</evidence>
<gene>
    <name evidence="1" type="primary">accD</name>
    <name type="ordered locus">PSPTO_3815</name>
</gene>
<proteinExistence type="inferred from homology"/>
<organism>
    <name type="scientific">Pseudomonas syringae pv. tomato (strain ATCC BAA-871 / DC3000)</name>
    <dbReference type="NCBI Taxonomy" id="223283"/>
    <lineage>
        <taxon>Bacteria</taxon>
        <taxon>Pseudomonadati</taxon>
        <taxon>Pseudomonadota</taxon>
        <taxon>Gammaproteobacteria</taxon>
        <taxon>Pseudomonadales</taxon>
        <taxon>Pseudomonadaceae</taxon>
        <taxon>Pseudomonas</taxon>
    </lineage>
</organism>
<reference key="1">
    <citation type="journal article" date="2003" name="Proc. Natl. Acad. Sci. U.S.A.">
        <title>The complete genome sequence of the Arabidopsis and tomato pathogen Pseudomonas syringae pv. tomato DC3000.</title>
        <authorList>
            <person name="Buell C.R."/>
            <person name="Joardar V."/>
            <person name="Lindeberg M."/>
            <person name="Selengut J."/>
            <person name="Paulsen I.T."/>
            <person name="Gwinn M.L."/>
            <person name="Dodson R.J."/>
            <person name="DeBoy R.T."/>
            <person name="Durkin A.S."/>
            <person name="Kolonay J.F."/>
            <person name="Madupu R."/>
            <person name="Daugherty S.C."/>
            <person name="Brinkac L.M."/>
            <person name="Beanan M.J."/>
            <person name="Haft D.H."/>
            <person name="Nelson W.C."/>
            <person name="Davidsen T.M."/>
            <person name="Zafar N."/>
            <person name="Zhou L."/>
            <person name="Liu J."/>
            <person name="Yuan Q."/>
            <person name="Khouri H.M."/>
            <person name="Fedorova N.B."/>
            <person name="Tran B."/>
            <person name="Russell D."/>
            <person name="Berry K.J."/>
            <person name="Utterback T.R."/>
            <person name="Van Aken S.E."/>
            <person name="Feldblyum T.V."/>
            <person name="D'Ascenzo M."/>
            <person name="Deng W.-L."/>
            <person name="Ramos A.R."/>
            <person name="Alfano J.R."/>
            <person name="Cartinhour S."/>
            <person name="Chatterjee A.K."/>
            <person name="Delaney T.P."/>
            <person name="Lazarowitz S.G."/>
            <person name="Martin G.B."/>
            <person name="Schneider D.J."/>
            <person name="Tang X."/>
            <person name="Bender C.L."/>
            <person name="White O."/>
            <person name="Fraser C.M."/>
            <person name="Collmer A."/>
        </authorList>
    </citation>
    <scope>NUCLEOTIDE SEQUENCE [LARGE SCALE GENOMIC DNA]</scope>
    <source>
        <strain>ATCC BAA-871 / DC3000</strain>
    </source>
</reference>
<name>ACCD_PSESM</name>
<keyword id="KW-0067">ATP-binding</keyword>
<keyword id="KW-0963">Cytoplasm</keyword>
<keyword id="KW-0275">Fatty acid biosynthesis</keyword>
<keyword id="KW-0276">Fatty acid metabolism</keyword>
<keyword id="KW-0444">Lipid biosynthesis</keyword>
<keyword id="KW-0443">Lipid metabolism</keyword>
<keyword id="KW-0479">Metal-binding</keyword>
<keyword id="KW-0547">Nucleotide-binding</keyword>
<keyword id="KW-1185">Reference proteome</keyword>
<keyword id="KW-0808">Transferase</keyword>
<keyword id="KW-0862">Zinc</keyword>
<keyword id="KW-0863">Zinc-finger</keyword>
<dbReference type="EC" id="2.1.3.15" evidence="1"/>
<dbReference type="EMBL" id="AE016853">
    <property type="protein sequence ID" value="AAO57284.1"/>
    <property type="molecule type" value="Genomic_DNA"/>
</dbReference>
<dbReference type="RefSeq" id="NP_793589.1">
    <property type="nucleotide sequence ID" value="NC_004578.1"/>
</dbReference>
<dbReference type="RefSeq" id="WP_005770594.1">
    <property type="nucleotide sequence ID" value="NC_004578.1"/>
</dbReference>
<dbReference type="SMR" id="Q87YI2"/>
<dbReference type="STRING" id="223283.PSPTO_3815"/>
<dbReference type="GeneID" id="1185486"/>
<dbReference type="KEGG" id="pst:PSPTO_3815"/>
<dbReference type="PATRIC" id="fig|223283.9.peg.3912"/>
<dbReference type="eggNOG" id="COG0777">
    <property type="taxonomic scope" value="Bacteria"/>
</dbReference>
<dbReference type="HOGENOM" id="CLU_015486_1_0_6"/>
<dbReference type="OrthoDB" id="9772975at2"/>
<dbReference type="PhylomeDB" id="Q87YI2"/>
<dbReference type="UniPathway" id="UPA00655">
    <property type="reaction ID" value="UER00711"/>
</dbReference>
<dbReference type="Proteomes" id="UP000002515">
    <property type="component" value="Chromosome"/>
</dbReference>
<dbReference type="GO" id="GO:0009329">
    <property type="term" value="C:acetate CoA-transferase complex"/>
    <property type="evidence" value="ECO:0007669"/>
    <property type="project" value="TreeGrafter"/>
</dbReference>
<dbReference type="GO" id="GO:0003989">
    <property type="term" value="F:acetyl-CoA carboxylase activity"/>
    <property type="evidence" value="ECO:0007669"/>
    <property type="project" value="InterPro"/>
</dbReference>
<dbReference type="GO" id="GO:0005524">
    <property type="term" value="F:ATP binding"/>
    <property type="evidence" value="ECO:0007669"/>
    <property type="project" value="UniProtKB-KW"/>
</dbReference>
<dbReference type="GO" id="GO:0016743">
    <property type="term" value="F:carboxyl- or carbamoyltransferase activity"/>
    <property type="evidence" value="ECO:0007669"/>
    <property type="project" value="UniProtKB-UniRule"/>
</dbReference>
<dbReference type="GO" id="GO:0008270">
    <property type="term" value="F:zinc ion binding"/>
    <property type="evidence" value="ECO:0007669"/>
    <property type="project" value="UniProtKB-UniRule"/>
</dbReference>
<dbReference type="GO" id="GO:0006633">
    <property type="term" value="P:fatty acid biosynthetic process"/>
    <property type="evidence" value="ECO:0007669"/>
    <property type="project" value="UniProtKB-KW"/>
</dbReference>
<dbReference type="GO" id="GO:2001295">
    <property type="term" value="P:malonyl-CoA biosynthetic process"/>
    <property type="evidence" value="ECO:0007669"/>
    <property type="project" value="UniProtKB-UniRule"/>
</dbReference>
<dbReference type="Gene3D" id="3.90.226.10">
    <property type="entry name" value="2-enoyl-CoA Hydratase, Chain A, domain 1"/>
    <property type="match status" value="1"/>
</dbReference>
<dbReference type="HAMAP" id="MF_01395">
    <property type="entry name" value="AcetylCoA_CT_beta"/>
    <property type="match status" value="1"/>
</dbReference>
<dbReference type="InterPro" id="IPR034733">
    <property type="entry name" value="AcCoA_carboxyl_beta"/>
</dbReference>
<dbReference type="InterPro" id="IPR000438">
    <property type="entry name" value="Acetyl_CoA_COase_Trfase_b_su"/>
</dbReference>
<dbReference type="InterPro" id="IPR029045">
    <property type="entry name" value="ClpP/crotonase-like_dom_sf"/>
</dbReference>
<dbReference type="InterPro" id="IPR011762">
    <property type="entry name" value="COA_CT_N"/>
</dbReference>
<dbReference type="InterPro" id="IPR041010">
    <property type="entry name" value="Znf-ACC"/>
</dbReference>
<dbReference type="NCBIfam" id="TIGR00515">
    <property type="entry name" value="accD"/>
    <property type="match status" value="1"/>
</dbReference>
<dbReference type="PANTHER" id="PTHR42995">
    <property type="entry name" value="ACETYL-COENZYME A CARBOXYLASE CARBOXYL TRANSFERASE SUBUNIT BETA, CHLOROPLASTIC"/>
    <property type="match status" value="1"/>
</dbReference>
<dbReference type="PANTHER" id="PTHR42995:SF5">
    <property type="entry name" value="ACETYL-COENZYME A CARBOXYLASE CARBOXYL TRANSFERASE SUBUNIT BETA, CHLOROPLASTIC"/>
    <property type="match status" value="1"/>
</dbReference>
<dbReference type="Pfam" id="PF01039">
    <property type="entry name" value="Carboxyl_trans"/>
    <property type="match status" value="1"/>
</dbReference>
<dbReference type="Pfam" id="PF17848">
    <property type="entry name" value="Zn_ribbon_ACC"/>
    <property type="match status" value="1"/>
</dbReference>
<dbReference type="PRINTS" id="PR01070">
    <property type="entry name" value="ACCCTRFRASEB"/>
</dbReference>
<dbReference type="SUPFAM" id="SSF52096">
    <property type="entry name" value="ClpP/crotonase"/>
    <property type="match status" value="1"/>
</dbReference>
<dbReference type="PROSITE" id="PS50980">
    <property type="entry name" value="COA_CT_NTER"/>
    <property type="match status" value="1"/>
</dbReference>
<accession>Q87YI2</accession>
<protein>
    <recommendedName>
        <fullName evidence="1">Acetyl-coenzyme A carboxylase carboxyl transferase subunit beta</fullName>
        <shortName evidence="1">ACCase subunit beta</shortName>
        <shortName evidence="1">Acetyl-CoA carboxylase carboxyltransferase subunit beta</shortName>
        <ecNumber evidence="1">2.1.3.15</ecNumber>
    </recommendedName>
</protein>
<sequence length="306" mass="33534">MSNWLVDKLIPSIMRSEVKKSSVPEGLWHKCPSCDAVLYRPELEKTLDVCPKCNHHMRIGARARLNIFLDVDGREELGVDLEPVDRLKFRDGKKYKDRLTAAQKQTGEKDALISMSGTLLGMPVVASAFEFSFMGGSMGAIVGERFVRAANYALENRCPMICFAASGGARMQEALISLMQMAKTSAVLARLREEGLPFISVLTDPVYGGVSASLAMLGDVIVAEPKALIGFAGPRVIEQTVREKLPEGFQRSEFLLDHGAIDMIIARSELRPRLGNLLAQMMNLPTPRFVAPVIEPIIVPPAPATI</sequence>
<comment type="function">
    <text evidence="1">Component of the acetyl coenzyme A carboxylase (ACC) complex. Biotin carboxylase (BC) catalyzes the carboxylation of biotin on its carrier protein (BCCP) and then the CO(2) group is transferred by the transcarboxylase to acetyl-CoA to form malonyl-CoA.</text>
</comment>
<comment type="catalytic activity">
    <reaction evidence="1">
        <text>N(6)-carboxybiotinyl-L-lysyl-[protein] + acetyl-CoA = N(6)-biotinyl-L-lysyl-[protein] + malonyl-CoA</text>
        <dbReference type="Rhea" id="RHEA:54728"/>
        <dbReference type="Rhea" id="RHEA-COMP:10505"/>
        <dbReference type="Rhea" id="RHEA-COMP:10506"/>
        <dbReference type="ChEBI" id="CHEBI:57288"/>
        <dbReference type="ChEBI" id="CHEBI:57384"/>
        <dbReference type="ChEBI" id="CHEBI:83144"/>
        <dbReference type="ChEBI" id="CHEBI:83145"/>
        <dbReference type="EC" id="2.1.3.15"/>
    </reaction>
</comment>
<comment type="cofactor">
    <cofactor evidence="1">
        <name>Zn(2+)</name>
        <dbReference type="ChEBI" id="CHEBI:29105"/>
    </cofactor>
    <text evidence="1">Binds 1 zinc ion per subunit.</text>
</comment>
<comment type="pathway">
    <text evidence="1">Lipid metabolism; malonyl-CoA biosynthesis; malonyl-CoA from acetyl-CoA: step 1/1.</text>
</comment>
<comment type="subunit">
    <text evidence="1">Acetyl-CoA carboxylase is a heterohexamer composed of biotin carboxyl carrier protein (AccB), biotin carboxylase (AccC) and two subunits each of ACCase subunit alpha (AccA) and ACCase subunit beta (AccD).</text>
</comment>
<comment type="subcellular location">
    <subcellularLocation>
        <location evidence="1">Cytoplasm</location>
    </subcellularLocation>
</comment>
<comment type="similarity">
    <text evidence="1">Belongs to the AccD/PCCB family.</text>
</comment>
<feature type="chain" id="PRO_0000359047" description="Acetyl-coenzyme A carboxylase carboxyl transferase subunit beta">
    <location>
        <begin position="1"/>
        <end position="306"/>
    </location>
</feature>
<feature type="domain" description="CoA carboxyltransferase N-terminal" evidence="2">
    <location>
        <begin position="27"/>
        <end position="296"/>
    </location>
</feature>
<feature type="zinc finger region" description="C4-type" evidence="1">
    <location>
        <begin position="31"/>
        <end position="53"/>
    </location>
</feature>
<feature type="binding site" evidence="1">
    <location>
        <position position="31"/>
    </location>
    <ligand>
        <name>Zn(2+)</name>
        <dbReference type="ChEBI" id="CHEBI:29105"/>
    </ligand>
</feature>
<feature type="binding site" evidence="1">
    <location>
        <position position="34"/>
    </location>
    <ligand>
        <name>Zn(2+)</name>
        <dbReference type="ChEBI" id="CHEBI:29105"/>
    </ligand>
</feature>
<feature type="binding site" evidence="1">
    <location>
        <position position="50"/>
    </location>
    <ligand>
        <name>Zn(2+)</name>
        <dbReference type="ChEBI" id="CHEBI:29105"/>
    </ligand>
</feature>
<feature type="binding site" evidence="1">
    <location>
        <position position="53"/>
    </location>
    <ligand>
        <name>Zn(2+)</name>
        <dbReference type="ChEBI" id="CHEBI:29105"/>
    </ligand>
</feature>